<sequence>MGSLSIWHWIVVIGVVLLLFGRGKISDLMGDVAQGIKSFKKGLQDDEKTAEKPEPVKSIDHTAPPAAAPRTDVGSKVV</sequence>
<comment type="function">
    <text evidence="1">Part of the twin-arginine translocation (Tat) system that transports large folded proteins containing a characteristic twin-arginine motif in their signal peptide across membranes. TatA could form the protein-conducting channel of the Tat system.</text>
</comment>
<comment type="subunit">
    <text evidence="1">The Tat system comprises two distinct complexes: a TatABC complex, containing multiple copies of TatA, TatB and TatC subunits, and a separate TatA complex, containing only TatA subunits. Substrates initially bind to the TatABC complex, which probably triggers association of the separate TatA complex to form the active translocon.</text>
</comment>
<comment type="subcellular location">
    <subcellularLocation>
        <location evidence="1">Cell inner membrane</location>
        <topology evidence="1">Single-pass membrane protein</topology>
    </subcellularLocation>
</comment>
<comment type="similarity">
    <text evidence="1">Belongs to the TatA/E family.</text>
</comment>
<reference key="1">
    <citation type="submission" date="2006-03" db="EMBL/GenBank/DDBJ databases">
        <title>Complete sequence of Rhodopseudomonas palustris BisB18.</title>
        <authorList>
            <consortium name="US DOE Joint Genome Institute"/>
            <person name="Copeland A."/>
            <person name="Lucas S."/>
            <person name="Lapidus A."/>
            <person name="Barry K."/>
            <person name="Detter J.C."/>
            <person name="Glavina del Rio T."/>
            <person name="Hammon N."/>
            <person name="Israni S."/>
            <person name="Dalin E."/>
            <person name="Tice H."/>
            <person name="Pitluck S."/>
            <person name="Chain P."/>
            <person name="Malfatti S."/>
            <person name="Shin M."/>
            <person name="Vergez L."/>
            <person name="Schmutz J."/>
            <person name="Larimer F."/>
            <person name="Land M."/>
            <person name="Hauser L."/>
            <person name="Pelletier D.A."/>
            <person name="Kyrpides N."/>
            <person name="Anderson I."/>
            <person name="Oda Y."/>
            <person name="Harwood C.S."/>
            <person name="Richardson P."/>
        </authorList>
    </citation>
    <scope>NUCLEOTIDE SEQUENCE [LARGE SCALE GENOMIC DNA]</scope>
    <source>
        <strain>BisB18</strain>
    </source>
</reference>
<evidence type="ECO:0000255" key="1">
    <source>
        <dbReference type="HAMAP-Rule" id="MF_00236"/>
    </source>
</evidence>
<evidence type="ECO:0000256" key="2">
    <source>
        <dbReference type="SAM" id="MobiDB-lite"/>
    </source>
</evidence>
<name>TATA_RHOPB</name>
<feature type="chain" id="PRO_1000044434" description="Sec-independent protein translocase protein TatA">
    <location>
        <begin position="1"/>
        <end position="78"/>
    </location>
</feature>
<feature type="transmembrane region" description="Helical" evidence="1">
    <location>
        <begin position="1"/>
        <end position="21"/>
    </location>
</feature>
<feature type="region of interest" description="Disordered" evidence="2">
    <location>
        <begin position="42"/>
        <end position="78"/>
    </location>
</feature>
<feature type="compositionally biased region" description="Basic and acidic residues" evidence="2">
    <location>
        <begin position="42"/>
        <end position="60"/>
    </location>
</feature>
<proteinExistence type="inferred from homology"/>
<keyword id="KW-0997">Cell inner membrane</keyword>
<keyword id="KW-1003">Cell membrane</keyword>
<keyword id="KW-0472">Membrane</keyword>
<keyword id="KW-0653">Protein transport</keyword>
<keyword id="KW-0811">Translocation</keyword>
<keyword id="KW-0812">Transmembrane</keyword>
<keyword id="KW-1133">Transmembrane helix</keyword>
<keyword id="KW-0813">Transport</keyword>
<organism>
    <name type="scientific">Rhodopseudomonas palustris (strain BisB18)</name>
    <dbReference type="NCBI Taxonomy" id="316056"/>
    <lineage>
        <taxon>Bacteria</taxon>
        <taxon>Pseudomonadati</taxon>
        <taxon>Pseudomonadota</taxon>
        <taxon>Alphaproteobacteria</taxon>
        <taxon>Hyphomicrobiales</taxon>
        <taxon>Nitrobacteraceae</taxon>
        <taxon>Rhodopseudomonas</taxon>
    </lineage>
</organism>
<dbReference type="EMBL" id="CP000301">
    <property type="protein sequence ID" value="ABD88064.1"/>
    <property type="molecule type" value="Genomic_DNA"/>
</dbReference>
<dbReference type="SMR" id="Q214X2"/>
<dbReference type="STRING" id="316056.RPC_2513"/>
<dbReference type="KEGG" id="rpc:RPC_2513"/>
<dbReference type="eggNOG" id="COG1826">
    <property type="taxonomic scope" value="Bacteria"/>
</dbReference>
<dbReference type="HOGENOM" id="CLU_086034_5_0_5"/>
<dbReference type="OrthoDB" id="7161179at2"/>
<dbReference type="GO" id="GO:0033281">
    <property type="term" value="C:TAT protein transport complex"/>
    <property type="evidence" value="ECO:0007669"/>
    <property type="project" value="UniProtKB-UniRule"/>
</dbReference>
<dbReference type="GO" id="GO:0008320">
    <property type="term" value="F:protein transmembrane transporter activity"/>
    <property type="evidence" value="ECO:0007669"/>
    <property type="project" value="UniProtKB-UniRule"/>
</dbReference>
<dbReference type="GO" id="GO:0043953">
    <property type="term" value="P:protein transport by the Tat complex"/>
    <property type="evidence" value="ECO:0007669"/>
    <property type="project" value="UniProtKB-UniRule"/>
</dbReference>
<dbReference type="Gene3D" id="1.20.5.3310">
    <property type="match status" value="1"/>
</dbReference>
<dbReference type="HAMAP" id="MF_00236">
    <property type="entry name" value="TatA_E"/>
    <property type="match status" value="1"/>
</dbReference>
<dbReference type="InterPro" id="IPR003369">
    <property type="entry name" value="TatA/B/E"/>
</dbReference>
<dbReference type="InterPro" id="IPR006312">
    <property type="entry name" value="TatA/E"/>
</dbReference>
<dbReference type="NCBIfam" id="NF001940">
    <property type="entry name" value="PRK00720.1"/>
    <property type="match status" value="1"/>
</dbReference>
<dbReference type="NCBIfam" id="TIGR01411">
    <property type="entry name" value="tatAE"/>
    <property type="match status" value="1"/>
</dbReference>
<dbReference type="PANTHER" id="PTHR42982">
    <property type="entry name" value="SEC-INDEPENDENT PROTEIN TRANSLOCASE PROTEIN TATA"/>
    <property type="match status" value="1"/>
</dbReference>
<dbReference type="PANTHER" id="PTHR42982:SF1">
    <property type="entry name" value="SEC-INDEPENDENT PROTEIN TRANSLOCASE PROTEIN TATA"/>
    <property type="match status" value="1"/>
</dbReference>
<dbReference type="Pfam" id="PF02416">
    <property type="entry name" value="TatA_B_E"/>
    <property type="match status" value="1"/>
</dbReference>
<accession>Q214X2</accession>
<gene>
    <name evidence="1" type="primary">tatA</name>
    <name type="ordered locus">RPC_2513</name>
</gene>
<protein>
    <recommendedName>
        <fullName evidence="1">Sec-independent protein translocase protein TatA</fullName>
    </recommendedName>
</protein>